<dbReference type="EC" id="2.7.1.11" evidence="1"/>
<dbReference type="EMBL" id="FM204883">
    <property type="protein sequence ID" value="CAW93596.1"/>
    <property type="molecule type" value="Genomic_DNA"/>
</dbReference>
<dbReference type="RefSeq" id="WP_012515510.1">
    <property type="nucleotide sequence ID" value="NC_012471.1"/>
</dbReference>
<dbReference type="SMR" id="C0M8V6"/>
<dbReference type="KEGG" id="seu:SEQ_1011"/>
<dbReference type="HOGENOM" id="CLU_020655_0_1_9"/>
<dbReference type="OrthoDB" id="9802503at2"/>
<dbReference type="UniPathway" id="UPA00109">
    <property type="reaction ID" value="UER00182"/>
</dbReference>
<dbReference type="Proteomes" id="UP000001365">
    <property type="component" value="Chromosome"/>
</dbReference>
<dbReference type="GO" id="GO:0005945">
    <property type="term" value="C:6-phosphofructokinase complex"/>
    <property type="evidence" value="ECO:0007669"/>
    <property type="project" value="TreeGrafter"/>
</dbReference>
<dbReference type="GO" id="GO:0003872">
    <property type="term" value="F:6-phosphofructokinase activity"/>
    <property type="evidence" value="ECO:0007669"/>
    <property type="project" value="UniProtKB-UniRule"/>
</dbReference>
<dbReference type="GO" id="GO:0016208">
    <property type="term" value="F:AMP binding"/>
    <property type="evidence" value="ECO:0007669"/>
    <property type="project" value="TreeGrafter"/>
</dbReference>
<dbReference type="GO" id="GO:0005524">
    <property type="term" value="F:ATP binding"/>
    <property type="evidence" value="ECO:0007669"/>
    <property type="project" value="UniProtKB-KW"/>
</dbReference>
<dbReference type="GO" id="GO:0070095">
    <property type="term" value="F:fructose-6-phosphate binding"/>
    <property type="evidence" value="ECO:0007669"/>
    <property type="project" value="TreeGrafter"/>
</dbReference>
<dbReference type="GO" id="GO:0042802">
    <property type="term" value="F:identical protein binding"/>
    <property type="evidence" value="ECO:0007669"/>
    <property type="project" value="TreeGrafter"/>
</dbReference>
<dbReference type="GO" id="GO:0046872">
    <property type="term" value="F:metal ion binding"/>
    <property type="evidence" value="ECO:0007669"/>
    <property type="project" value="UniProtKB-KW"/>
</dbReference>
<dbReference type="GO" id="GO:0048029">
    <property type="term" value="F:monosaccharide binding"/>
    <property type="evidence" value="ECO:0007669"/>
    <property type="project" value="TreeGrafter"/>
</dbReference>
<dbReference type="GO" id="GO:0061621">
    <property type="term" value="P:canonical glycolysis"/>
    <property type="evidence" value="ECO:0007669"/>
    <property type="project" value="TreeGrafter"/>
</dbReference>
<dbReference type="GO" id="GO:0030388">
    <property type="term" value="P:fructose 1,6-bisphosphate metabolic process"/>
    <property type="evidence" value="ECO:0007669"/>
    <property type="project" value="TreeGrafter"/>
</dbReference>
<dbReference type="GO" id="GO:0006002">
    <property type="term" value="P:fructose 6-phosphate metabolic process"/>
    <property type="evidence" value="ECO:0007669"/>
    <property type="project" value="InterPro"/>
</dbReference>
<dbReference type="FunFam" id="3.40.50.450:FF:000001">
    <property type="entry name" value="ATP-dependent 6-phosphofructokinase"/>
    <property type="match status" value="1"/>
</dbReference>
<dbReference type="FunFam" id="3.40.50.460:FF:000002">
    <property type="entry name" value="ATP-dependent 6-phosphofructokinase"/>
    <property type="match status" value="1"/>
</dbReference>
<dbReference type="Gene3D" id="3.40.50.450">
    <property type="match status" value="1"/>
</dbReference>
<dbReference type="Gene3D" id="3.40.50.460">
    <property type="entry name" value="Phosphofructokinase domain"/>
    <property type="match status" value="1"/>
</dbReference>
<dbReference type="HAMAP" id="MF_00339">
    <property type="entry name" value="Phosphofructokinase_I_B1"/>
    <property type="match status" value="1"/>
</dbReference>
<dbReference type="InterPro" id="IPR022953">
    <property type="entry name" value="ATP_PFK"/>
</dbReference>
<dbReference type="InterPro" id="IPR012003">
    <property type="entry name" value="ATP_PFK_prok-type"/>
</dbReference>
<dbReference type="InterPro" id="IPR012828">
    <property type="entry name" value="PFKA_ATP_prok"/>
</dbReference>
<dbReference type="InterPro" id="IPR015912">
    <property type="entry name" value="Phosphofructokinase_CS"/>
</dbReference>
<dbReference type="InterPro" id="IPR000023">
    <property type="entry name" value="Phosphofructokinase_dom"/>
</dbReference>
<dbReference type="InterPro" id="IPR035966">
    <property type="entry name" value="PKF_sf"/>
</dbReference>
<dbReference type="NCBIfam" id="TIGR02482">
    <property type="entry name" value="PFKA_ATP"/>
    <property type="match status" value="1"/>
</dbReference>
<dbReference type="NCBIfam" id="NF002872">
    <property type="entry name" value="PRK03202.1"/>
    <property type="match status" value="1"/>
</dbReference>
<dbReference type="PANTHER" id="PTHR13697:SF4">
    <property type="entry name" value="ATP-DEPENDENT 6-PHOSPHOFRUCTOKINASE"/>
    <property type="match status" value="1"/>
</dbReference>
<dbReference type="PANTHER" id="PTHR13697">
    <property type="entry name" value="PHOSPHOFRUCTOKINASE"/>
    <property type="match status" value="1"/>
</dbReference>
<dbReference type="Pfam" id="PF00365">
    <property type="entry name" value="PFK"/>
    <property type="match status" value="1"/>
</dbReference>
<dbReference type="PIRSF" id="PIRSF000532">
    <property type="entry name" value="ATP_PFK_prok"/>
    <property type="match status" value="1"/>
</dbReference>
<dbReference type="PRINTS" id="PR00476">
    <property type="entry name" value="PHFRCTKINASE"/>
</dbReference>
<dbReference type="SUPFAM" id="SSF53784">
    <property type="entry name" value="Phosphofructokinase"/>
    <property type="match status" value="1"/>
</dbReference>
<dbReference type="PROSITE" id="PS00433">
    <property type="entry name" value="PHOSPHOFRUCTOKINASE"/>
    <property type="match status" value="1"/>
</dbReference>
<reference key="1">
    <citation type="journal article" date="2009" name="PLoS Pathog.">
        <title>Genomic evidence for the evolution of Streptococcus equi: host restriction, increased virulence, and genetic exchange with human pathogens.</title>
        <authorList>
            <person name="Holden M.T.G."/>
            <person name="Heather Z."/>
            <person name="Paillot R."/>
            <person name="Steward K.F."/>
            <person name="Webb K."/>
            <person name="Ainslie F."/>
            <person name="Jourdan T."/>
            <person name="Bason N.C."/>
            <person name="Holroyd N.E."/>
            <person name="Mungall K."/>
            <person name="Quail M.A."/>
            <person name="Sanders M."/>
            <person name="Simmonds M."/>
            <person name="Willey D."/>
            <person name="Brooks K."/>
            <person name="Aanensen D.M."/>
            <person name="Spratt B.G."/>
            <person name="Jolley K.A."/>
            <person name="Maiden M.C.J."/>
            <person name="Kehoe M."/>
            <person name="Chanter N."/>
            <person name="Bentley S.D."/>
            <person name="Robinson C."/>
            <person name="Maskell D.J."/>
            <person name="Parkhill J."/>
            <person name="Waller A.S."/>
        </authorList>
    </citation>
    <scope>NUCLEOTIDE SEQUENCE [LARGE SCALE GENOMIC DNA]</scope>
    <source>
        <strain>4047</strain>
    </source>
</reference>
<keyword id="KW-0021">Allosteric enzyme</keyword>
<keyword id="KW-0067">ATP-binding</keyword>
<keyword id="KW-0963">Cytoplasm</keyword>
<keyword id="KW-0324">Glycolysis</keyword>
<keyword id="KW-0418">Kinase</keyword>
<keyword id="KW-0460">Magnesium</keyword>
<keyword id="KW-0479">Metal-binding</keyword>
<keyword id="KW-0547">Nucleotide-binding</keyword>
<keyword id="KW-0808">Transferase</keyword>
<feature type="chain" id="PRO_1000192380" description="ATP-dependent 6-phosphofructokinase">
    <location>
        <begin position="1"/>
        <end position="337"/>
    </location>
</feature>
<feature type="active site" description="Proton acceptor" evidence="1">
    <location>
        <position position="127"/>
    </location>
</feature>
<feature type="binding site" evidence="1">
    <location>
        <position position="11"/>
    </location>
    <ligand>
        <name>ATP</name>
        <dbReference type="ChEBI" id="CHEBI:30616"/>
    </ligand>
</feature>
<feature type="binding site" evidence="1">
    <location>
        <begin position="21"/>
        <end position="25"/>
    </location>
    <ligand>
        <name>ADP</name>
        <dbReference type="ChEBI" id="CHEBI:456216"/>
        <note>allosteric activator; ligand shared between dimeric partners</note>
    </ligand>
</feature>
<feature type="binding site" evidence="1">
    <location>
        <begin position="72"/>
        <end position="73"/>
    </location>
    <ligand>
        <name>ATP</name>
        <dbReference type="ChEBI" id="CHEBI:30616"/>
    </ligand>
</feature>
<feature type="binding site" evidence="1">
    <location>
        <begin position="102"/>
        <end position="105"/>
    </location>
    <ligand>
        <name>ATP</name>
        <dbReference type="ChEBI" id="CHEBI:30616"/>
    </ligand>
</feature>
<feature type="binding site" evidence="1">
    <location>
        <position position="103"/>
    </location>
    <ligand>
        <name>Mg(2+)</name>
        <dbReference type="ChEBI" id="CHEBI:18420"/>
        <note>catalytic</note>
    </ligand>
</feature>
<feature type="binding site" description="in other chain" evidence="1">
    <location>
        <begin position="125"/>
        <end position="127"/>
    </location>
    <ligand>
        <name>substrate</name>
        <note>ligand shared between dimeric partners</note>
    </ligand>
</feature>
<feature type="binding site" description="in other chain" evidence="1">
    <location>
        <position position="154"/>
    </location>
    <ligand>
        <name>ADP</name>
        <dbReference type="ChEBI" id="CHEBI:456216"/>
        <note>allosteric activator; ligand shared between dimeric partners</note>
    </ligand>
</feature>
<feature type="binding site" evidence="1">
    <location>
        <position position="162"/>
    </location>
    <ligand>
        <name>substrate</name>
        <note>ligand shared between dimeric partners</note>
    </ligand>
</feature>
<feature type="binding site" description="in other chain" evidence="1">
    <location>
        <begin position="169"/>
        <end position="171"/>
    </location>
    <ligand>
        <name>substrate</name>
        <note>ligand shared between dimeric partners</note>
    </ligand>
</feature>
<feature type="binding site" description="in other chain" evidence="1">
    <location>
        <begin position="185"/>
        <end position="187"/>
    </location>
    <ligand>
        <name>ADP</name>
        <dbReference type="ChEBI" id="CHEBI:456216"/>
        <note>allosteric activator; ligand shared between dimeric partners</note>
    </ligand>
</feature>
<feature type="binding site" description="in other chain" evidence="1">
    <location>
        <position position="212"/>
    </location>
    <ligand>
        <name>ADP</name>
        <dbReference type="ChEBI" id="CHEBI:456216"/>
        <note>allosteric activator; ligand shared between dimeric partners</note>
    </ligand>
</feature>
<feature type="binding site" description="in other chain" evidence="1">
    <location>
        <begin position="214"/>
        <end position="216"/>
    </location>
    <ligand>
        <name>ADP</name>
        <dbReference type="ChEBI" id="CHEBI:456216"/>
        <note>allosteric activator; ligand shared between dimeric partners</note>
    </ligand>
</feature>
<feature type="binding site" description="in other chain" evidence="1">
    <location>
        <position position="223"/>
    </location>
    <ligand>
        <name>substrate</name>
        <note>ligand shared between dimeric partners</note>
    </ligand>
</feature>
<feature type="binding site" evidence="1">
    <location>
        <position position="245"/>
    </location>
    <ligand>
        <name>substrate</name>
        <note>ligand shared between dimeric partners</note>
    </ligand>
</feature>
<feature type="binding site" description="in other chain" evidence="1">
    <location>
        <begin position="251"/>
        <end position="254"/>
    </location>
    <ligand>
        <name>substrate</name>
        <note>ligand shared between dimeric partners</note>
    </ligand>
</feature>
<protein>
    <recommendedName>
        <fullName evidence="1">ATP-dependent 6-phosphofructokinase</fullName>
        <shortName evidence="1">ATP-PFK</shortName>
        <shortName evidence="1">Phosphofructokinase</shortName>
        <ecNumber evidence="1">2.7.1.11</ecNumber>
    </recommendedName>
    <alternativeName>
        <fullName evidence="1">Phosphohexokinase</fullName>
    </alternativeName>
</protein>
<sequence>MKRIAVLTSGGDAPGMNAAIRAVVRKAISEGMEVYGINRGYAGMVDGDIFPLGSKEVGDKISRGGTFLYSARYPEFAQLEGQLAGIEQLKKHGIEGVVVIGGDGSYHGAMRLTEHGFPAVGIPGTIDNDIAGTDYTIGFDTAVNTAVEAIDKLRDTSSSHGRTFVVEVMGRNAGDIALWAGIASGADQIIVPEEEFDIHKVVSTIKDDFENRGKNHHIIVLAEGVMSGEAFAQQLKEAGDESDLRVTNLGHILRGGSPTARDRVIASWMGAHAVELLKEGKGGLAVGIHNEELVESPILGSAEDGALFSLTDEGNIVVNNPHKARLDYAALNRSLAQ</sequence>
<evidence type="ECO:0000255" key="1">
    <source>
        <dbReference type="HAMAP-Rule" id="MF_00339"/>
    </source>
</evidence>
<gene>
    <name evidence="1" type="primary">pfkA</name>
    <name type="ordered locus">SEQ_1011</name>
</gene>
<name>PFKA_STRE4</name>
<accession>C0M8V6</accession>
<organism>
    <name type="scientific">Streptococcus equi subsp. equi (strain 4047)</name>
    <dbReference type="NCBI Taxonomy" id="553482"/>
    <lineage>
        <taxon>Bacteria</taxon>
        <taxon>Bacillati</taxon>
        <taxon>Bacillota</taxon>
        <taxon>Bacilli</taxon>
        <taxon>Lactobacillales</taxon>
        <taxon>Streptococcaceae</taxon>
        <taxon>Streptococcus</taxon>
    </lineage>
</organism>
<proteinExistence type="inferred from homology"/>
<comment type="function">
    <text evidence="1">Catalyzes the phosphorylation of D-fructose 6-phosphate to fructose 1,6-bisphosphate by ATP, the first committing step of glycolysis.</text>
</comment>
<comment type="catalytic activity">
    <reaction evidence="1">
        <text>beta-D-fructose 6-phosphate + ATP = beta-D-fructose 1,6-bisphosphate + ADP + H(+)</text>
        <dbReference type="Rhea" id="RHEA:16109"/>
        <dbReference type="ChEBI" id="CHEBI:15378"/>
        <dbReference type="ChEBI" id="CHEBI:30616"/>
        <dbReference type="ChEBI" id="CHEBI:32966"/>
        <dbReference type="ChEBI" id="CHEBI:57634"/>
        <dbReference type="ChEBI" id="CHEBI:456216"/>
        <dbReference type="EC" id="2.7.1.11"/>
    </reaction>
</comment>
<comment type="cofactor">
    <cofactor evidence="1">
        <name>Mg(2+)</name>
        <dbReference type="ChEBI" id="CHEBI:18420"/>
    </cofactor>
</comment>
<comment type="activity regulation">
    <text evidence="1">Allosterically activated by ADP and other diphosphonucleosides, and allosterically inhibited by phosphoenolpyruvate.</text>
</comment>
<comment type="pathway">
    <text evidence="1">Carbohydrate degradation; glycolysis; D-glyceraldehyde 3-phosphate and glycerone phosphate from D-glucose: step 3/4.</text>
</comment>
<comment type="subunit">
    <text evidence="1">Homotetramer.</text>
</comment>
<comment type="subcellular location">
    <subcellularLocation>
        <location evidence="1">Cytoplasm</location>
    </subcellularLocation>
</comment>
<comment type="similarity">
    <text evidence="1">Belongs to the phosphofructokinase type A (PFKA) family. ATP-dependent PFK group I subfamily. Prokaryotic clade 'B1' sub-subfamily.</text>
</comment>